<feature type="chain" id="PRO_1000145395" description="Peptide methionine sulfoxide reductase MsrA">
    <location>
        <begin position="1"/>
        <end position="157"/>
    </location>
</feature>
<feature type="active site" evidence="1">
    <location>
        <position position="10"/>
    </location>
</feature>
<proteinExistence type="inferred from homology"/>
<dbReference type="EC" id="1.8.4.11" evidence="1"/>
<dbReference type="EMBL" id="CP000939">
    <property type="protein sequence ID" value="ACA44814.1"/>
    <property type="molecule type" value="Genomic_DNA"/>
</dbReference>
<dbReference type="RefSeq" id="WP_003402462.1">
    <property type="nucleotide sequence ID" value="NC_010516.1"/>
</dbReference>
<dbReference type="SMR" id="B1IMT7"/>
<dbReference type="KEGG" id="cbb:CLD_2703"/>
<dbReference type="HOGENOM" id="CLU_031040_10_2_9"/>
<dbReference type="Proteomes" id="UP000008541">
    <property type="component" value="Chromosome"/>
</dbReference>
<dbReference type="GO" id="GO:0005737">
    <property type="term" value="C:cytoplasm"/>
    <property type="evidence" value="ECO:0007669"/>
    <property type="project" value="TreeGrafter"/>
</dbReference>
<dbReference type="GO" id="GO:0036456">
    <property type="term" value="F:L-methionine-(S)-S-oxide reductase activity"/>
    <property type="evidence" value="ECO:0007669"/>
    <property type="project" value="TreeGrafter"/>
</dbReference>
<dbReference type="GO" id="GO:0008113">
    <property type="term" value="F:peptide-methionine (S)-S-oxide reductase activity"/>
    <property type="evidence" value="ECO:0007669"/>
    <property type="project" value="UniProtKB-UniRule"/>
</dbReference>
<dbReference type="GO" id="GO:0034599">
    <property type="term" value="P:cellular response to oxidative stress"/>
    <property type="evidence" value="ECO:0007669"/>
    <property type="project" value="TreeGrafter"/>
</dbReference>
<dbReference type="GO" id="GO:0036211">
    <property type="term" value="P:protein modification process"/>
    <property type="evidence" value="ECO:0007669"/>
    <property type="project" value="UniProtKB-UniRule"/>
</dbReference>
<dbReference type="FunFam" id="3.30.1060.10:FF:000010">
    <property type="entry name" value="Peptide methionine sulfoxide reductase msrA"/>
    <property type="match status" value="1"/>
</dbReference>
<dbReference type="Gene3D" id="3.30.1060.10">
    <property type="entry name" value="Peptide methionine sulphoxide reductase MsrA"/>
    <property type="match status" value="1"/>
</dbReference>
<dbReference type="HAMAP" id="MF_01401">
    <property type="entry name" value="MsrA"/>
    <property type="match status" value="1"/>
</dbReference>
<dbReference type="InterPro" id="IPR002569">
    <property type="entry name" value="Met_Sox_Rdtase_MsrA_dom"/>
</dbReference>
<dbReference type="InterPro" id="IPR036509">
    <property type="entry name" value="Met_Sox_Rdtase_MsrA_sf"/>
</dbReference>
<dbReference type="InterPro" id="IPR050162">
    <property type="entry name" value="MsrA_MetSO_reductase"/>
</dbReference>
<dbReference type="NCBIfam" id="TIGR00401">
    <property type="entry name" value="msrA"/>
    <property type="match status" value="1"/>
</dbReference>
<dbReference type="PANTHER" id="PTHR42799">
    <property type="entry name" value="MITOCHONDRIAL PEPTIDE METHIONINE SULFOXIDE REDUCTASE"/>
    <property type="match status" value="1"/>
</dbReference>
<dbReference type="PANTHER" id="PTHR42799:SF2">
    <property type="entry name" value="MITOCHONDRIAL PEPTIDE METHIONINE SULFOXIDE REDUCTASE"/>
    <property type="match status" value="1"/>
</dbReference>
<dbReference type="Pfam" id="PF01625">
    <property type="entry name" value="PMSR"/>
    <property type="match status" value="1"/>
</dbReference>
<dbReference type="SUPFAM" id="SSF55068">
    <property type="entry name" value="Peptide methionine sulfoxide reductase"/>
    <property type="match status" value="1"/>
</dbReference>
<organism>
    <name type="scientific">Clostridium botulinum (strain Okra / Type B1)</name>
    <dbReference type="NCBI Taxonomy" id="498213"/>
    <lineage>
        <taxon>Bacteria</taxon>
        <taxon>Bacillati</taxon>
        <taxon>Bacillota</taxon>
        <taxon>Clostridia</taxon>
        <taxon>Eubacteriales</taxon>
        <taxon>Clostridiaceae</taxon>
        <taxon>Clostridium</taxon>
    </lineage>
</organism>
<gene>
    <name evidence="1" type="primary">msrA</name>
    <name type="ordered locus">CLD_2703</name>
</gene>
<sequence length="157" mass="18102">MKEIVLAGGCFWGVEEYMSRIKGIVETKVGYANGIKENPSYEEVCSGTTGHAEACYIKYDESIISLEELLNKFWSIIDPTVLNKQGNDRGTQYRTGIFYLDQKDLNVIIKSKSQEQKNYRKPIVTEVEPLKCFYEAEEYHQKYLKKNPGGYCHIHLD</sequence>
<comment type="function">
    <text evidence="1">Has an important function as a repair enzyme for proteins that have been inactivated by oxidation. Catalyzes the reversible oxidation-reduction of methionine sulfoxide in proteins to methionine.</text>
</comment>
<comment type="catalytic activity">
    <reaction evidence="1">
        <text>L-methionyl-[protein] + [thioredoxin]-disulfide + H2O = L-methionyl-(S)-S-oxide-[protein] + [thioredoxin]-dithiol</text>
        <dbReference type="Rhea" id="RHEA:14217"/>
        <dbReference type="Rhea" id="RHEA-COMP:10698"/>
        <dbReference type="Rhea" id="RHEA-COMP:10700"/>
        <dbReference type="Rhea" id="RHEA-COMP:12313"/>
        <dbReference type="Rhea" id="RHEA-COMP:12315"/>
        <dbReference type="ChEBI" id="CHEBI:15377"/>
        <dbReference type="ChEBI" id="CHEBI:16044"/>
        <dbReference type="ChEBI" id="CHEBI:29950"/>
        <dbReference type="ChEBI" id="CHEBI:44120"/>
        <dbReference type="ChEBI" id="CHEBI:50058"/>
        <dbReference type="EC" id="1.8.4.11"/>
    </reaction>
</comment>
<comment type="catalytic activity">
    <reaction evidence="1">
        <text>[thioredoxin]-disulfide + L-methionine + H2O = L-methionine (S)-S-oxide + [thioredoxin]-dithiol</text>
        <dbReference type="Rhea" id="RHEA:19993"/>
        <dbReference type="Rhea" id="RHEA-COMP:10698"/>
        <dbReference type="Rhea" id="RHEA-COMP:10700"/>
        <dbReference type="ChEBI" id="CHEBI:15377"/>
        <dbReference type="ChEBI" id="CHEBI:29950"/>
        <dbReference type="ChEBI" id="CHEBI:50058"/>
        <dbReference type="ChEBI" id="CHEBI:57844"/>
        <dbReference type="ChEBI" id="CHEBI:58772"/>
        <dbReference type="EC" id="1.8.4.11"/>
    </reaction>
</comment>
<comment type="similarity">
    <text evidence="1">Belongs to the MsrA Met sulfoxide reductase family.</text>
</comment>
<protein>
    <recommendedName>
        <fullName evidence="1">Peptide methionine sulfoxide reductase MsrA</fullName>
        <shortName evidence="1">Protein-methionine-S-oxide reductase</shortName>
        <ecNumber evidence="1">1.8.4.11</ecNumber>
    </recommendedName>
    <alternativeName>
        <fullName evidence="1">Peptide-methionine (S)-S-oxide reductase</fullName>
        <shortName evidence="1">Peptide Met(O) reductase</shortName>
    </alternativeName>
</protein>
<accession>B1IMT7</accession>
<name>MSRA_CLOBK</name>
<keyword id="KW-0560">Oxidoreductase</keyword>
<reference key="1">
    <citation type="journal article" date="2007" name="PLoS ONE">
        <title>Analysis of the neurotoxin complex genes in Clostridium botulinum A1-A4 and B1 strains: BoNT/A3, /Ba4 and /B1 clusters are located within plasmids.</title>
        <authorList>
            <person name="Smith T.J."/>
            <person name="Hill K.K."/>
            <person name="Foley B.T."/>
            <person name="Detter J.C."/>
            <person name="Munk A.C."/>
            <person name="Bruce D.C."/>
            <person name="Doggett N.A."/>
            <person name="Smith L.A."/>
            <person name="Marks J.D."/>
            <person name="Xie G."/>
            <person name="Brettin T.S."/>
        </authorList>
    </citation>
    <scope>NUCLEOTIDE SEQUENCE [LARGE SCALE GENOMIC DNA]</scope>
    <source>
        <strain>Okra / Type B1</strain>
    </source>
</reference>
<evidence type="ECO:0000255" key="1">
    <source>
        <dbReference type="HAMAP-Rule" id="MF_01401"/>
    </source>
</evidence>